<dbReference type="EMBL" id="AE005174">
    <property type="protein sequence ID" value="AAG55543.1"/>
    <property type="molecule type" value="Genomic_DNA"/>
</dbReference>
<dbReference type="EMBL" id="BA000007">
    <property type="protein sequence ID" value="BAB34574.1"/>
    <property type="molecule type" value="Genomic_DNA"/>
</dbReference>
<dbReference type="PIR" id="C85635">
    <property type="entry name" value="C85635"/>
</dbReference>
<dbReference type="PIR" id="G90772">
    <property type="entry name" value="G90772"/>
</dbReference>
<dbReference type="RefSeq" id="NP_309178.1">
    <property type="nucleotide sequence ID" value="NC_002695.1"/>
</dbReference>
<dbReference type="RefSeq" id="WP_001230236.1">
    <property type="nucleotide sequence ID" value="NZ_VOAI01000025.1"/>
</dbReference>
<dbReference type="STRING" id="155864.Z1414"/>
<dbReference type="GeneID" id="912595"/>
<dbReference type="KEGG" id="ece:Z1414"/>
<dbReference type="KEGG" id="ecs:ECs_1151"/>
<dbReference type="PATRIC" id="fig|386585.9.peg.1267"/>
<dbReference type="eggNOG" id="COG3005">
    <property type="taxonomic scope" value="Bacteria"/>
</dbReference>
<dbReference type="HOGENOM" id="CLU_058814_0_0_6"/>
<dbReference type="OMA" id="QQAMNEG"/>
<dbReference type="Proteomes" id="UP000000558">
    <property type="component" value="Chromosome"/>
</dbReference>
<dbReference type="Proteomes" id="UP000002519">
    <property type="component" value="Chromosome"/>
</dbReference>
<dbReference type="GO" id="GO:0009276">
    <property type="term" value="C:Gram-negative-bacterium-type cell wall"/>
    <property type="evidence" value="ECO:0007669"/>
    <property type="project" value="InterPro"/>
</dbReference>
<dbReference type="GO" id="GO:0005886">
    <property type="term" value="C:plasma membrane"/>
    <property type="evidence" value="ECO:0007669"/>
    <property type="project" value="UniProtKB-SubCell"/>
</dbReference>
<dbReference type="GO" id="GO:0009055">
    <property type="term" value="F:electron transfer activity"/>
    <property type="evidence" value="ECO:0007669"/>
    <property type="project" value="InterPro"/>
</dbReference>
<dbReference type="GO" id="GO:0020037">
    <property type="term" value="F:heme binding"/>
    <property type="evidence" value="ECO:0007669"/>
    <property type="project" value="InterPro"/>
</dbReference>
<dbReference type="GO" id="GO:0005506">
    <property type="term" value="F:iron ion binding"/>
    <property type="evidence" value="ECO:0007669"/>
    <property type="project" value="InterPro"/>
</dbReference>
<dbReference type="GO" id="GO:0009061">
    <property type="term" value="P:anaerobic respiration"/>
    <property type="evidence" value="ECO:0007669"/>
    <property type="project" value="TreeGrafter"/>
</dbReference>
<dbReference type="FunFam" id="1.10.3820.10:FF:000001">
    <property type="entry name" value="Cytochrome c-type protein"/>
    <property type="match status" value="1"/>
</dbReference>
<dbReference type="Gene3D" id="1.10.3820.10">
    <property type="entry name" value="Di-heme elbow motif domain"/>
    <property type="match status" value="1"/>
</dbReference>
<dbReference type="InterPro" id="IPR051174">
    <property type="entry name" value="Cytochrome_c-type_ET"/>
</dbReference>
<dbReference type="InterPro" id="IPR009154">
    <property type="entry name" value="Membr-bd_4haem_cyt_TorC"/>
</dbReference>
<dbReference type="InterPro" id="IPR036280">
    <property type="entry name" value="Multihaem_cyt_sf"/>
</dbReference>
<dbReference type="InterPro" id="IPR005126">
    <property type="entry name" value="NapC/NirT_cyt_c_N"/>
</dbReference>
<dbReference type="InterPro" id="IPR038266">
    <property type="entry name" value="NapC/NirT_cytc_sf"/>
</dbReference>
<dbReference type="NCBIfam" id="NF011606">
    <property type="entry name" value="PRK15032.1"/>
    <property type="match status" value="1"/>
</dbReference>
<dbReference type="NCBIfam" id="TIGR02162">
    <property type="entry name" value="torC"/>
    <property type="match status" value="1"/>
</dbReference>
<dbReference type="PANTHER" id="PTHR30333">
    <property type="entry name" value="CYTOCHROME C-TYPE PROTEIN"/>
    <property type="match status" value="1"/>
</dbReference>
<dbReference type="PANTHER" id="PTHR30333:SF2">
    <property type="entry name" value="CYTOCHROME C-TYPE PROTEIN TORC"/>
    <property type="match status" value="1"/>
</dbReference>
<dbReference type="Pfam" id="PF03264">
    <property type="entry name" value="Cytochrom_NNT"/>
    <property type="match status" value="1"/>
</dbReference>
<dbReference type="PIRSF" id="PIRSF000014">
    <property type="entry name" value="4_hem_cytch_TorC"/>
    <property type="match status" value="1"/>
</dbReference>
<dbReference type="SUPFAM" id="SSF48695">
    <property type="entry name" value="Multiheme cytochromes"/>
    <property type="match status" value="1"/>
</dbReference>
<dbReference type="PROSITE" id="PS51008">
    <property type="entry name" value="MULTIHEME_CYTC"/>
    <property type="match status" value="1"/>
</dbReference>
<sequence>MRKLWNALRRPSARWSVLALVAIGIVIGIALIVLPHVGIKVTSTTEFCVSCHSMQPVYEEYKQSVHFQNASGVRAECHDCHIPPDIPGMVKRKLEASNDIYQTFIAHSIDTPEKFEAKRAELAEREWARMKENNSATCRSCHNYDAMDHAKQHPEAARQMKVAAKDNQSCIDCHKGIAHQLPDMSSGFRKQFDELRAGANDSGDTLYSIDIKPIYAAKGDKEASGSLLPASEVKVLKRDGDWLQIEITGWTESAGRQRVLTQFPGKRIFVASIRGDVQQQVKTLEKTTVADTNTEWSKLQATAWMKKGDMVNDIKPIWAYADSLYNGTCNQCHGAPEISHFDANGWIGTLNGMIGFTSLDKREERTLLKYLQMNASDTAGKAHGDKKEEK</sequence>
<proteinExistence type="inferred from homology"/>
<name>TORC_ECO57</name>
<organism>
    <name type="scientific">Escherichia coli O157:H7</name>
    <dbReference type="NCBI Taxonomy" id="83334"/>
    <lineage>
        <taxon>Bacteria</taxon>
        <taxon>Pseudomonadati</taxon>
        <taxon>Pseudomonadota</taxon>
        <taxon>Gammaproteobacteria</taxon>
        <taxon>Enterobacterales</taxon>
        <taxon>Enterobacteriaceae</taxon>
        <taxon>Escherichia</taxon>
    </lineage>
</organism>
<keyword id="KW-0997">Cell inner membrane</keyword>
<keyword id="KW-1003">Cell membrane</keyword>
<keyword id="KW-0249">Electron transport</keyword>
<keyword id="KW-0349">Heme</keyword>
<keyword id="KW-0408">Iron</keyword>
<keyword id="KW-0472">Membrane</keyword>
<keyword id="KW-0479">Metal-binding</keyword>
<keyword id="KW-1185">Reference proteome</keyword>
<keyword id="KW-0812">Transmembrane</keyword>
<keyword id="KW-1133">Transmembrane helix</keyword>
<keyword id="KW-0813">Transport</keyword>
<comment type="function">
    <text evidence="1">Part of the anaerobic respiratory chain of trimethylamine-N-oxide reductase TorA. Acts by transferring electrons from the membranous menaquinones to TorA. This transfer probably involves an electron transfer pathway from menaquinones to the N-terminal domain of TorC, then from the N-terminus to the C-terminus, and finally to TorA. TorC apocytochrome negatively autoregulates the torCAD operon probably by inhibiting the TorS kinase activity (By similarity).</text>
</comment>
<comment type="subunit">
    <text evidence="1">The N-terminal domain interacts with TorA. The immature C-terminal domain can bind to the N-terminal detector region of TorS (By similarity).</text>
</comment>
<comment type="subcellular location">
    <subcellularLocation>
        <location evidence="1">Cell inner membrane</location>
        <topology evidence="1">Single-pass type II membrane protein</topology>
    </subcellularLocation>
</comment>
<comment type="PTM">
    <text evidence="1">Binds 5 heme groups per subunit.</text>
</comment>
<comment type="similarity">
    <text evidence="3">Belongs to the TorC/TorY family.</text>
</comment>
<reference key="1">
    <citation type="journal article" date="2001" name="Nature">
        <title>Genome sequence of enterohaemorrhagic Escherichia coli O157:H7.</title>
        <authorList>
            <person name="Perna N.T."/>
            <person name="Plunkett G. III"/>
            <person name="Burland V."/>
            <person name="Mau B."/>
            <person name="Glasner J.D."/>
            <person name="Rose D.J."/>
            <person name="Mayhew G.F."/>
            <person name="Evans P.S."/>
            <person name="Gregor J."/>
            <person name="Kirkpatrick H.A."/>
            <person name="Posfai G."/>
            <person name="Hackett J."/>
            <person name="Klink S."/>
            <person name="Boutin A."/>
            <person name="Shao Y."/>
            <person name="Miller L."/>
            <person name="Grotbeck E.J."/>
            <person name="Davis N.W."/>
            <person name="Lim A."/>
            <person name="Dimalanta E.T."/>
            <person name="Potamousis K."/>
            <person name="Apodaca J."/>
            <person name="Anantharaman T.S."/>
            <person name="Lin J."/>
            <person name="Yen G."/>
            <person name="Schwartz D.C."/>
            <person name="Welch R.A."/>
            <person name="Blattner F.R."/>
        </authorList>
    </citation>
    <scope>NUCLEOTIDE SEQUENCE [LARGE SCALE GENOMIC DNA]</scope>
    <source>
        <strain>O157:H7 / EDL933 / ATCC 700927 / EHEC</strain>
    </source>
</reference>
<reference key="2">
    <citation type="journal article" date="2001" name="DNA Res.">
        <title>Complete genome sequence of enterohemorrhagic Escherichia coli O157:H7 and genomic comparison with a laboratory strain K-12.</title>
        <authorList>
            <person name="Hayashi T."/>
            <person name="Makino K."/>
            <person name="Ohnishi M."/>
            <person name="Kurokawa K."/>
            <person name="Ishii K."/>
            <person name="Yokoyama K."/>
            <person name="Han C.-G."/>
            <person name="Ohtsubo E."/>
            <person name="Nakayama K."/>
            <person name="Murata T."/>
            <person name="Tanaka M."/>
            <person name="Tobe T."/>
            <person name="Iida T."/>
            <person name="Takami H."/>
            <person name="Honda T."/>
            <person name="Sasakawa C."/>
            <person name="Ogasawara N."/>
            <person name="Yasunaga T."/>
            <person name="Kuhara S."/>
            <person name="Shiba T."/>
            <person name="Hattori M."/>
            <person name="Shinagawa H."/>
        </authorList>
    </citation>
    <scope>NUCLEOTIDE SEQUENCE [LARGE SCALE GENOMIC DNA]</scope>
    <source>
        <strain>O157:H7 / Sakai / RIMD 0509952 / EHEC</strain>
    </source>
</reference>
<feature type="chain" id="PRO_0000108428" description="Cytochrome c-type protein TorC">
    <location>
        <begin position="1"/>
        <end position="390"/>
    </location>
</feature>
<feature type="topological domain" description="Cytoplasmic" evidence="2">
    <location>
        <begin position="1"/>
        <end position="16"/>
    </location>
</feature>
<feature type="transmembrane region" description="Helical" evidence="2">
    <location>
        <begin position="17"/>
        <end position="37"/>
    </location>
</feature>
<feature type="topological domain" description="Periplasmic" evidence="2">
    <location>
        <begin position="38"/>
        <end position="390"/>
    </location>
</feature>
<feature type="binding site" description="covalent" evidence="1">
    <location>
        <position position="48"/>
    </location>
    <ligand>
        <name>heme</name>
        <dbReference type="ChEBI" id="CHEBI:30413"/>
        <label>1</label>
    </ligand>
</feature>
<feature type="binding site" description="covalent" evidence="1">
    <location>
        <position position="51"/>
    </location>
    <ligand>
        <name>heme</name>
        <dbReference type="ChEBI" id="CHEBI:30413"/>
        <label>1</label>
    </ligand>
</feature>
<feature type="binding site" description="axial binding residue" evidence="1">
    <location>
        <position position="52"/>
    </location>
    <ligand>
        <name>heme</name>
        <dbReference type="ChEBI" id="CHEBI:30413"/>
        <label>1</label>
    </ligand>
    <ligandPart>
        <name>Fe</name>
        <dbReference type="ChEBI" id="CHEBI:18248"/>
    </ligandPart>
</feature>
<feature type="binding site" description="covalent" evidence="1">
    <location>
        <position position="77"/>
    </location>
    <ligand>
        <name>heme</name>
        <dbReference type="ChEBI" id="CHEBI:30413"/>
        <label>2</label>
    </ligand>
</feature>
<feature type="binding site" description="covalent" evidence="1">
    <location>
        <position position="80"/>
    </location>
    <ligand>
        <name>heme</name>
        <dbReference type="ChEBI" id="CHEBI:30413"/>
        <label>2</label>
    </ligand>
</feature>
<feature type="binding site" description="axial binding residue" evidence="1">
    <location>
        <position position="81"/>
    </location>
    <ligand>
        <name>heme</name>
        <dbReference type="ChEBI" id="CHEBI:30413"/>
        <label>2</label>
    </ligand>
    <ligandPart>
        <name>Fe</name>
        <dbReference type="ChEBI" id="CHEBI:18248"/>
    </ligandPart>
</feature>
<feature type="binding site" description="covalent" evidence="1">
    <location>
        <position position="138"/>
    </location>
    <ligand>
        <name>heme</name>
        <dbReference type="ChEBI" id="CHEBI:30413"/>
        <label>3</label>
    </ligand>
</feature>
<feature type="binding site" description="covalent" evidence="1">
    <location>
        <position position="141"/>
    </location>
    <ligand>
        <name>heme</name>
        <dbReference type="ChEBI" id="CHEBI:30413"/>
        <label>3</label>
    </ligand>
</feature>
<feature type="binding site" description="axial binding residue" evidence="1">
    <location>
        <position position="142"/>
    </location>
    <ligand>
        <name>heme</name>
        <dbReference type="ChEBI" id="CHEBI:30413"/>
        <label>3</label>
    </ligand>
    <ligandPart>
        <name>Fe</name>
        <dbReference type="ChEBI" id="CHEBI:18248"/>
    </ligandPart>
</feature>
<feature type="binding site" description="covalent" evidence="1">
    <location>
        <position position="170"/>
    </location>
    <ligand>
        <name>heme</name>
        <dbReference type="ChEBI" id="CHEBI:30413"/>
        <label>4</label>
    </ligand>
</feature>
<feature type="binding site" description="covalent" evidence="1">
    <location>
        <position position="173"/>
    </location>
    <ligand>
        <name>heme</name>
        <dbReference type="ChEBI" id="CHEBI:30413"/>
        <label>4</label>
    </ligand>
</feature>
<feature type="binding site" description="axial binding residue" evidence="1">
    <location>
        <position position="174"/>
    </location>
    <ligand>
        <name>heme</name>
        <dbReference type="ChEBI" id="CHEBI:30413"/>
        <label>4</label>
    </ligand>
    <ligandPart>
        <name>Fe</name>
        <dbReference type="ChEBI" id="CHEBI:18248"/>
    </ligandPart>
</feature>
<feature type="binding site" description="covalent" evidence="1">
    <location>
        <position position="329"/>
    </location>
    <ligand>
        <name>heme</name>
        <dbReference type="ChEBI" id="CHEBI:30413"/>
        <label>5</label>
    </ligand>
</feature>
<feature type="binding site" description="covalent" evidence="1">
    <location>
        <position position="332"/>
    </location>
    <ligand>
        <name>heme</name>
        <dbReference type="ChEBI" id="CHEBI:30413"/>
        <label>5</label>
    </ligand>
</feature>
<feature type="binding site" description="axial binding residue" evidence="1">
    <location>
        <position position="333"/>
    </location>
    <ligand>
        <name>heme</name>
        <dbReference type="ChEBI" id="CHEBI:30413"/>
        <label>5</label>
    </ligand>
    <ligandPart>
        <name>Fe</name>
        <dbReference type="ChEBI" id="CHEBI:18248"/>
    </ligandPart>
</feature>
<accession>P58359</accession>
<gene>
    <name type="primary">torC</name>
    <name type="ordered locus">Z1414</name>
    <name type="ordered locus">ECs1151</name>
</gene>
<evidence type="ECO:0000250" key="1"/>
<evidence type="ECO:0000255" key="2"/>
<evidence type="ECO:0000305" key="3"/>
<protein>
    <recommendedName>
        <fullName>Cytochrome c-type protein TorC</fullName>
    </recommendedName>
</protein>